<organism>
    <name type="scientific">Lactobacillus delbrueckii subsp. bulgaricus (strain ATCC BAA-365 / Lb-18)</name>
    <dbReference type="NCBI Taxonomy" id="321956"/>
    <lineage>
        <taxon>Bacteria</taxon>
        <taxon>Bacillati</taxon>
        <taxon>Bacillota</taxon>
        <taxon>Bacilli</taxon>
        <taxon>Lactobacillales</taxon>
        <taxon>Lactobacillaceae</taxon>
        <taxon>Lactobacillus</taxon>
    </lineage>
</organism>
<keyword id="KW-0067">ATP-binding</keyword>
<keyword id="KW-0963">Cytoplasm</keyword>
<keyword id="KW-0547">Nucleotide-binding</keyword>
<keyword id="KW-0694">RNA-binding</keyword>
<keyword id="KW-0784">Thiamine biosynthesis</keyword>
<keyword id="KW-0808">Transferase</keyword>
<keyword id="KW-0820">tRNA-binding</keyword>
<name>THII_LACDB</name>
<dbReference type="EC" id="2.8.1.4" evidence="1"/>
<dbReference type="EMBL" id="CP000412">
    <property type="protein sequence ID" value="ABJ58283.1"/>
    <property type="molecule type" value="Genomic_DNA"/>
</dbReference>
<dbReference type="RefSeq" id="WP_011678128.1">
    <property type="nucleotide sequence ID" value="NC_008529.1"/>
</dbReference>
<dbReference type="SMR" id="Q04B89"/>
<dbReference type="KEGG" id="lbu:LBUL_0657"/>
<dbReference type="HOGENOM" id="CLU_037952_4_0_9"/>
<dbReference type="BioCyc" id="LDEL321956:LBUL_RS03130-MONOMER"/>
<dbReference type="UniPathway" id="UPA00060"/>
<dbReference type="GO" id="GO:0005829">
    <property type="term" value="C:cytosol"/>
    <property type="evidence" value="ECO:0007669"/>
    <property type="project" value="TreeGrafter"/>
</dbReference>
<dbReference type="GO" id="GO:0005524">
    <property type="term" value="F:ATP binding"/>
    <property type="evidence" value="ECO:0007669"/>
    <property type="project" value="UniProtKB-UniRule"/>
</dbReference>
<dbReference type="GO" id="GO:0004810">
    <property type="term" value="F:CCA tRNA nucleotidyltransferase activity"/>
    <property type="evidence" value="ECO:0007669"/>
    <property type="project" value="InterPro"/>
</dbReference>
<dbReference type="GO" id="GO:0000049">
    <property type="term" value="F:tRNA binding"/>
    <property type="evidence" value="ECO:0007669"/>
    <property type="project" value="UniProtKB-UniRule"/>
</dbReference>
<dbReference type="GO" id="GO:0140741">
    <property type="term" value="F:tRNA-uracil-4 sulfurtransferase activity"/>
    <property type="evidence" value="ECO:0007669"/>
    <property type="project" value="UniProtKB-EC"/>
</dbReference>
<dbReference type="GO" id="GO:0009228">
    <property type="term" value="P:thiamine biosynthetic process"/>
    <property type="evidence" value="ECO:0007669"/>
    <property type="project" value="UniProtKB-KW"/>
</dbReference>
<dbReference type="GO" id="GO:0009229">
    <property type="term" value="P:thiamine diphosphate biosynthetic process"/>
    <property type="evidence" value="ECO:0007669"/>
    <property type="project" value="UniProtKB-UniRule"/>
</dbReference>
<dbReference type="GO" id="GO:0052837">
    <property type="term" value="P:thiazole biosynthetic process"/>
    <property type="evidence" value="ECO:0007669"/>
    <property type="project" value="TreeGrafter"/>
</dbReference>
<dbReference type="GO" id="GO:0002937">
    <property type="term" value="P:tRNA 4-thiouridine biosynthesis"/>
    <property type="evidence" value="ECO:0007669"/>
    <property type="project" value="TreeGrafter"/>
</dbReference>
<dbReference type="CDD" id="cd01712">
    <property type="entry name" value="PPase_ThiI"/>
    <property type="match status" value="1"/>
</dbReference>
<dbReference type="CDD" id="cd11716">
    <property type="entry name" value="THUMP_ThiI"/>
    <property type="match status" value="1"/>
</dbReference>
<dbReference type="FunFam" id="3.40.50.620:FF:000053">
    <property type="entry name" value="Probable tRNA sulfurtransferase"/>
    <property type="match status" value="1"/>
</dbReference>
<dbReference type="Gene3D" id="3.30.2130.30">
    <property type="match status" value="1"/>
</dbReference>
<dbReference type="Gene3D" id="3.40.50.620">
    <property type="entry name" value="HUPs"/>
    <property type="match status" value="1"/>
</dbReference>
<dbReference type="HAMAP" id="MF_00021">
    <property type="entry name" value="ThiI"/>
    <property type="match status" value="1"/>
</dbReference>
<dbReference type="InterPro" id="IPR014729">
    <property type="entry name" value="Rossmann-like_a/b/a_fold"/>
</dbReference>
<dbReference type="InterPro" id="IPR020536">
    <property type="entry name" value="ThiI_AANH"/>
</dbReference>
<dbReference type="InterPro" id="IPR054173">
    <property type="entry name" value="ThiI_fer"/>
</dbReference>
<dbReference type="InterPro" id="IPR049961">
    <property type="entry name" value="ThiI_N"/>
</dbReference>
<dbReference type="InterPro" id="IPR004114">
    <property type="entry name" value="THUMP_dom"/>
</dbReference>
<dbReference type="InterPro" id="IPR049962">
    <property type="entry name" value="THUMP_ThiI"/>
</dbReference>
<dbReference type="InterPro" id="IPR003720">
    <property type="entry name" value="tRNA_STrfase"/>
</dbReference>
<dbReference type="InterPro" id="IPR050102">
    <property type="entry name" value="tRNA_sulfurtransferase_ThiI"/>
</dbReference>
<dbReference type="NCBIfam" id="TIGR00342">
    <property type="entry name" value="tRNA uracil 4-sulfurtransferase ThiI"/>
    <property type="match status" value="1"/>
</dbReference>
<dbReference type="PANTHER" id="PTHR43209">
    <property type="entry name" value="TRNA SULFURTRANSFERASE"/>
    <property type="match status" value="1"/>
</dbReference>
<dbReference type="PANTHER" id="PTHR43209:SF1">
    <property type="entry name" value="TRNA SULFURTRANSFERASE"/>
    <property type="match status" value="1"/>
</dbReference>
<dbReference type="Pfam" id="PF02568">
    <property type="entry name" value="ThiI"/>
    <property type="match status" value="1"/>
</dbReference>
<dbReference type="Pfam" id="PF22025">
    <property type="entry name" value="ThiI_fer"/>
    <property type="match status" value="1"/>
</dbReference>
<dbReference type="Pfam" id="PF02926">
    <property type="entry name" value="THUMP"/>
    <property type="match status" value="1"/>
</dbReference>
<dbReference type="SMART" id="SM00981">
    <property type="entry name" value="THUMP"/>
    <property type="match status" value="1"/>
</dbReference>
<dbReference type="SUPFAM" id="SSF52402">
    <property type="entry name" value="Adenine nucleotide alpha hydrolases-like"/>
    <property type="match status" value="1"/>
</dbReference>
<dbReference type="SUPFAM" id="SSF143437">
    <property type="entry name" value="THUMP domain-like"/>
    <property type="match status" value="1"/>
</dbReference>
<dbReference type="PROSITE" id="PS51165">
    <property type="entry name" value="THUMP"/>
    <property type="match status" value="1"/>
</dbReference>
<comment type="function">
    <text evidence="1">Catalyzes the ATP-dependent transfer of a sulfur to tRNA to produce 4-thiouridine in position 8 of tRNAs, which functions as a near-UV photosensor. Also catalyzes the transfer of sulfur to the sulfur carrier protein ThiS, forming ThiS-thiocarboxylate. This is a step in the synthesis of thiazole, in the thiamine biosynthesis pathway. The sulfur is donated as persulfide by IscS.</text>
</comment>
<comment type="catalytic activity">
    <reaction evidence="1">
        <text>[ThiI sulfur-carrier protein]-S-sulfanyl-L-cysteine + a uridine in tRNA + 2 reduced [2Fe-2S]-[ferredoxin] + ATP + H(+) = [ThiI sulfur-carrier protein]-L-cysteine + a 4-thiouridine in tRNA + 2 oxidized [2Fe-2S]-[ferredoxin] + AMP + diphosphate</text>
        <dbReference type="Rhea" id="RHEA:24176"/>
        <dbReference type="Rhea" id="RHEA-COMP:10000"/>
        <dbReference type="Rhea" id="RHEA-COMP:10001"/>
        <dbReference type="Rhea" id="RHEA-COMP:13337"/>
        <dbReference type="Rhea" id="RHEA-COMP:13338"/>
        <dbReference type="Rhea" id="RHEA-COMP:13339"/>
        <dbReference type="Rhea" id="RHEA-COMP:13340"/>
        <dbReference type="ChEBI" id="CHEBI:15378"/>
        <dbReference type="ChEBI" id="CHEBI:29950"/>
        <dbReference type="ChEBI" id="CHEBI:30616"/>
        <dbReference type="ChEBI" id="CHEBI:33019"/>
        <dbReference type="ChEBI" id="CHEBI:33737"/>
        <dbReference type="ChEBI" id="CHEBI:33738"/>
        <dbReference type="ChEBI" id="CHEBI:61963"/>
        <dbReference type="ChEBI" id="CHEBI:65315"/>
        <dbReference type="ChEBI" id="CHEBI:136798"/>
        <dbReference type="ChEBI" id="CHEBI:456215"/>
        <dbReference type="EC" id="2.8.1.4"/>
    </reaction>
</comment>
<comment type="catalytic activity">
    <reaction evidence="1">
        <text>[ThiS sulfur-carrier protein]-C-terminal Gly-Gly-AMP + S-sulfanyl-L-cysteinyl-[cysteine desulfurase] + AH2 = [ThiS sulfur-carrier protein]-C-terminal-Gly-aminoethanethioate + L-cysteinyl-[cysteine desulfurase] + A + AMP + 2 H(+)</text>
        <dbReference type="Rhea" id="RHEA:43340"/>
        <dbReference type="Rhea" id="RHEA-COMP:12157"/>
        <dbReference type="Rhea" id="RHEA-COMP:12158"/>
        <dbReference type="Rhea" id="RHEA-COMP:12910"/>
        <dbReference type="Rhea" id="RHEA-COMP:19908"/>
        <dbReference type="ChEBI" id="CHEBI:13193"/>
        <dbReference type="ChEBI" id="CHEBI:15378"/>
        <dbReference type="ChEBI" id="CHEBI:17499"/>
        <dbReference type="ChEBI" id="CHEBI:29950"/>
        <dbReference type="ChEBI" id="CHEBI:61963"/>
        <dbReference type="ChEBI" id="CHEBI:90618"/>
        <dbReference type="ChEBI" id="CHEBI:232372"/>
        <dbReference type="ChEBI" id="CHEBI:456215"/>
    </reaction>
</comment>
<comment type="pathway">
    <text evidence="1">Cofactor biosynthesis; thiamine diphosphate biosynthesis.</text>
</comment>
<comment type="subcellular location">
    <subcellularLocation>
        <location evidence="1">Cytoplasm</location>
    </subcellularLocation>
</comment>
<comment type="similarity">
    <text evidence="1">Belongs to the ThiI family.</text>
</comment>
<sequence length="405" mass="45623">MQYTEIMIRYGELSTKGKNRKDFINRLASNVQKVLHDFPDLKIQTHHDRMHILLNGTPFEPVNDRLKVVFGIQTYSPVIKTEKSLEAIEKTALELMQATYKAGMTFKVNTRRSDHKFIYDTNQLNQMVADYLYNHMEGLQAEMKHPDMVLLLEIRQDGAYISNQLLHGAGGMPVGTAGKAVMMLSGGIDSPVASYLAMKRGVNIEMVHFFSPPYTSEKALAKAKELTSILAKYSGRINFIEVPFAEIQETIKEKLPEGYLMTVQRRFMLRLADIIREKRHALAIFNGESVGQVASQTLESMSAINDVTTTPVLRPVATMDKTEIIAKAEEIGTFDLSIQPFEDCCTIFAPPRPKTKPKIDKAREYESRLDVDGLIERALAGVKVTPIYPGQSFLDDLDEEDADLL</sequence>
<proteinExistence type="inferred from homology"/>
<accession>Q04B89</accession>
<protein>
    <recommendedName>
        <fullName evidence="1">Probable tRNA sulfurtransferase</fullName>
        <ecNumber evidence="1">2.8.1.4</ecNumber>
    </recommendedName>
    <alternativeName>
        <fullName evidence="1">Sulfur carrier protein ThiS sulfurtransferase</fullName>
    </alternativeName>
    <alternativeName>
        <fullName evidence="1">Thiamine biosynthesis protein ThiI</fullName>
    </alternativeName>
    <alternativeName>
        <fullName evidence="1">tRNA 4-thiouridine synthase</fullName>
    </alternativeName>
</protein>
<gene>
    <name evidence="1" type="primary">thiI</name>
    <name type="ordered locus">LBUL_0657</name>
</gene>
<evidence type="ECO:0000255" key="1">
    <source>
        <dbReference type="HAMAP-Rule" id="MF_00021"/>
    </source>
</evidence>
<reference key="1">
    <citation type="journal article" date="2006" name="Proc. Natl. Acad. Sci. U.S.A.">
        <title>Comparative genomics of the lactic acid bacteria.</title>
        <authorList>
            <person name="Makarova K.S."/>
            <person name="Slesarev A."/>
            <person name="Wolf Y.I."/>
            <person name="Sorokin A."/>
            <person name="Mirkin B."/>
            <person name="Koonin E.V."/>
            <person name="Pavlov A."/>
            <person name="Pavlova N."/>
            <person name="Karamychev V."/>
            <person name="Polouchine N."/>
            <person name="Shakhova V."/>
            <person name="Grigoriev I."/>
            <person name="Lou Y."/>
            <person name="Rohksar D."/>
            <person name="Lucas S."/>
            <person name="Huang K."/>
            <person name="Goodstein D.M."/>
            <person name="Hawkins T."/>
            <person name="Plengvidhya V."/>
            <person name="Welker D."/>
            <person name="Hughes J."/>
            <person name="Goh Y."/>
            <person name="Benson A."/>
            <person name="Baldwin K."/>
            <person name="Lee J.-H."/>
            <person name="Diaz-Muniz I."/>
            <person name="Dosti B."/>
            <person name="Smeianov V."/>
            <person name="Wechter W."/>
            <person name="Barabote R."/>
            <person name="Lorca G."/>
            <person name="Altermann E."/>
            <person name="Barrangou R."/>
            <person name="Ganesan B."/>
            <person name="Xie Y."/>
            <person name="Rawsthorne H."/>
            <person name="Tamir D."/>
            <person name="Parker C."/>
            <person name="Breidt F."/>
            <person name="Broadbent J.R."/>
            <person name="Hutkins R."/>
            <person name="O'Sullivan D."/>
            <person name="Steele J."/>
            <person name="Unlu G."/>
            <person name="Saier M.H. Jr."/>
            <person name="Klaenhammer T."/>
            <person name="Richardson P."/>
            <person name="Kozyavkin S."/>
            <person name="Weimer B.C."/>
            <person name="Mills D.A."/>
        </authorList>
    </citation>
    <scope>NUCLEOTIDE SEQUENCE [LARGE SCALE GENOMIC DNA]</scope>
    <source>
        <strain>ATCC BAA-365 / Lb-18</strain>
    </source>
</reference>
<feature type="chain" id="PRO_1000074235" description="Probable tRNA sulfurtransferase">
    <location>
        <begin position="1"/>
        <end position="405"/>
    </location>
</feature>
<feature type="domain" description="THUMP" evidence="1">
    <location>
        <begin position="60"/>
        <end position="165"/>
    </location>
</feature>
<feature type="binding site" evidence="1">
    <location>
        <begin position="183"/>
        <end position="184"/>
    </location>
    <ligand>
        <name>ATP</name>
        <dbReference type="ChEBI" id="CHEBI:30616"/>
    </ligand>
</feature>
<feature type="binding site" evidence="1">
    <location>
        <begin position="208"/>
        <end position="209"/>
    </location>
    <ligand>
        <name>ATP</name>
        <dbReference type="ChEBI" id="CHEBI:30616"/>
    </ligand>
</feature>
<feature type="binding site" evidence="1">
    <location>
        <position position="265"/>
    </location>
    <ligand>
        <name>ATP</name>
        <dbReference type="ChEBI" id="CHEBI:30616"/>
    </ligand>
</feature>
<feature type="binding site" evidence="1">
    <location>
        <position position="287"/>
    </location>
    <ligand>
        <name>ATP</name>
        <dbReference type="ChEBI" id="CHEBI:30616"/>
    </ligand>
</feature>
<feature type="binding site" evidence="1">
    <location>
        <position position="296"/>
    </location>
    <ligand>
        <name>ATP</name>
        <dbReference type="ChEBI" id="CHEBI:30616"/>
    </ligand>
</feature>